<comment type="function">
    <text evidence="1">Cell wall formation. Catalyzes the transfer of a GlcNAc subunit on undecaprenyl-pyrophosphoryl-MurNAc-pentapeptide (lipid intermediate I) to form undecaprenyl-pyrophosphoryl-MurNAc-(pentapeptide)GlcNAc (lipid intermediate II).</text>
</comment>
<comment type="catalytic activity">
    <reaction evidence="1">
        <text>di-trans,octa-cis-undecaprenyl diphospho-N-acetyl-alpha-D-muramoyl-L-alanyl-D-glutamyl-meso-2,6-diaminopimeloyl-D-alanyl-D-alanine + UDP-N-acetyl-alpha-D-glucosamine = di-trans,octa-cis-undecaprenyl diphospho-[N-acetyl-alpha-D-glucosaminyl-(1-&gt;4)]-N-acetyl-alpha-D-muramoyl-L-alanyl-D-glutamyl-meso-2,6-diaminopimeloyl-D-alanyl-D-alanine + UDP + H(+)</text>
        <dbReference type="Rhea" id="RHEA:31227"/>
        <dbReference type="ChEBI" id="CHEBI:15378"/>
        <dbReference type="ChEBI" id="CHEBI:57705"/>
        <dbReference type="ChEBI" id="CHEBI:58223"/>
        <dbReference type="ChEBI" id="CHEBI:61387"/>
        <dbReference type="ChEBI" id="CHEBI:61388"/>
        <dbReference type="EC" id="2.4.1.227"/>
    </reaction>
</comment>
<comment type="pathway">
    <text evidence="1">Cell wall biogenesis; peptidoglycan biosynthesis.</text>
</comment>
<comment type="subcellular location">
    <subcellularLocation>
        <location evidence="1">Cell inner membrane</location>
        <topology evidence="1">Peripheral membrane protein</topology>
        <orientation evidence="1">Cytoplasmic side</orientation>
    </subcellularLocation>
</comment>
<comment type="similarity">
    <text evidence="1">Belongs to the glycosyltransferase 28 family. MurG subfamily.</text>
</comment>
<feature type="chain" id="PRO_0000109231" description="UDP-N-acetylglucosamine--N-acetylmuramyl-(pentapeptide) pyrophosphoryl-undecaprenol N-acetylglucosamine transferase">
    <location>
        <begin position="1"/>
        <end position="339"/>
    </location>
</feature>
<feature type="binding site" evidence="1">
    <location>
        <begin position="11"/>
        <end position="13"/>
    </location>
    <ligand>
        <name>UDP-N-acetyl-alpha-D-glucosamine</name>
        <dbReference type="ChEBI" id="CHEBI:57705"/>
    </ligand>
</feature>
<feature type="binding site" evidence="1">
    <location>
        <position position="127"/>
    </location>
    <ligand>
        <name>UDP-N-acetyl-alpha-D-glucosamine</name>
        <dbReference type="ChEBI" id="CHEBI:57705"/>
    </ligand>
</feature>
<feature type="binding site" evidence="1">
    <location>
        <position position="170"/>
    </location>
    <ligand>
        <name>UDP-N-acetyl-alpha-D-glucosamine</name>
        <dbReference type="ChEBI" id="CHEBI:57705"/>
    </ligand>
</feature>
<feature type="binding site" evidence="1">
    <location>
        <position position="188"/>
    </location>
    <ligand>
        <name>UDP-N-acetyl-alpha-D-glucosamine</name>
        <dbReference type="ChEBI" id="CHEBI:57705"/>
    </ligand>
</feature>
<feature type="binding site" evidence="1">
    <location>
        <position position="235"/>
    </location>
    <ligand>
        <name>UDP-N-acetyl-alpha-D-glucosamine</name>
        <dbReference type="ChEBI" id="CHEBI:57705"/>
    </ligand>
</feature>
<feature type="binding site" evidence="1">
    <location>
        <position position="280"/>
    </location>
    <ligand>
        <name>UDP-N-acetyl-alpha-D-glucosamine</name>
        <dbReference type="ChEBI" id="CHEBI:57705"/>
    </ligand>
</feature>
<keyword id="KW-0131">Cell cycle</keyword>
<keyword id="KW-0132">Cell division</keyword>
<keyword id="KW-0997">Cell inner membrane</keyword>
<keyword id="KW-1003">Cell membrane</keyword>
<keyword id="KW-0133">Cell shape</keyword>
<keyword id="KW-0961">Cell wall biogenesis/degradation</keyword>
<keyword id="KW-0328">Glycosyltransferase</keyword>
<keyword id="KW-0472">Membrane</keyword>
<keyword id="KW-0573">Peptidoglycan synthesis</keyword>
<keyword id="KW-1185">Reference proteome</keyword>
<keyword id="KW-0808">Transferase</keyword>
<accession>Q9WY74</accession>
<organism>
    <name type="scientific">Thermotoga maritima (strain ATCC 43589 / DSM 3109 / JCM 10099 / NBRC 100826 / MSB8)</name>
    <dbReference type="NCBI Taxonomy" id="243274"/>
    <lineage>
        <taxon>Bacteria</taxon>
        <taxon>Thermotogati</taxon>
        <taxon>Thermotogota</taxon>
        <taxon>Thermotogae</taxon>
        <taxon>Thermotogales</taxon>
        <taxon>Thermotogaceae</taxon>
        <taxon>Thermotoga</taxon>
    </lineage>
</organism>
<reference key="1">
    <citation type="journal article" date="1999" name="Nature">
        <title>Evidence for lateral gene transfer between Archaea and Bacteria from genome sequence of Thermotoga maritima.</title>
        <authorList>
            <person name="Nelson K.E."/>
            <person name="Clayton R.A."/>
            <person name="Gill S.R."/>
            <person name="Gwinn M.L."/>
            <person name="Dodson R.J."/>
            <person name="Haft D.H."/>
            <person name="Hickey E.K."/>
            <person name="Peterson J.D."/>
            <person name="Nelson W.C."/>
            <person name="Ketchum K.A."/>
            <person name="McDonald L.A."/>
            <person name="Utterback T.R."/>
            <person name="Malek J.A."/>
            <person name="Linher K.D."/>
            <person name="Garrett M.M."/>
            <person name="Stewart A.M."/>
            <person name="Cotton M.D."/>
            <person name="Pratt M.S."/>
            <person name="Phillips C.A."/>
            <person name="Richardson D.L."/>
            <person name="Heidelberg J.F."/>
            <person name="Sutton G.G."/>
            <person name="Fleischmann R.D."/>
            <person name="Eisen J.A."/>
            <person name="White O."/>
            <person name="Salzberg S.L."/>
            <person name="Smith H.O."/>
            <person name="Venter J.C."/>
            <person name="Fraser C.M."/>
        </authorList>
    </citation>
    <scope>NUCLEOTIDE SEQUENCE [LARGE SCALE GENOMIC DNA]</scope>
    <source>
        <strain>ATCC 43589 / DSM 3109 / JCM 10099 / NBRC 100826 / MSB8</strain>
    </source>
</reference>
<protein>
    <recommendedName>
        <fullName evidence="1">UDP-N-acetylglucosamine--N-acetylmuramyl-(pentapeptide) pyrophosphoryl-undecaprenol N-acetylglucosamine transferase</fullName>
        <ecNumber evidence="1">2.4.1.227</ecNumber>
    </recommendedName>
    <alternativeName>
        <fullName evidence="1">Undecaprenyl-PP-MurNAc-pentapeptide-UDPGlcNAc GlcNAc transferase</fullName>
    </alternativeName>
</protein>
<proteinExistence type="inferred from homology"/>
<name>MURG_THEMA</name>
<sequence>MIKVAAAGGGTGGHLYPLLAILETLAKRVDVKVLFFAVKGKIDERVVRKDHPEFETVSIDVRGLLRPLHHPKNLWRTLKIGIATIEVKKHLKRFKPDLVVLTGGYISGVVGLAAKDLGIPIFVHEQNVVPGLAVKVLSQYAKKVFVSFERTRDYLREWQDKIVVTGCPVRETEKEAPLKDFVLVLGGSLGSEAINELMEKVYPELQETQFVHSTGSDDWTERLSVFPNVTALTYIDPMGAYWKKAIASISRAGASTIAEMMYYGVPGILIPWESSAESHQLENALEAERLGYAIVIRENEASPRKIIESIDKVVKKGKIEKMKENPASKISKEILGEIM</sequence>
<dbReference type="EC" id="2.4.1.227" evidence="1"/>
<dbReference type="EMBL" id="AE000512">
    <property type="protein sequence ID" value="AAD35323.1"/>
    <property type="molecule type" value="Genomic_DNA"/>
</dbReference>
<dbReference type="PIR" id="B72402">
    <property type="entry name" value="B72402"/>
</dbReference>
<dbReference type="RefSeq" id="NP_228046.1">
    <property type="nucleotide sequence ID" value="NC_000853.1"/>
</dbReference>
<dbReference type="RefSeq" id="WP_004082926.1">
    <property type="nucleotide sequence ID" value="NC_000853.1"/>
</dbReference>
<dbReference type="SMR" id="Q9WY74"/>
<dbReference type="FunCoup" id="Q9WY74">
    <property type="interactions" value="266"/>
</dbReference>
<dbReference type="STRING" id="243274.TM_0232"/>
<dbReference type="CAZy" id="GT28">
    <property type="family name" value="Glycosyltransferase Family 28"/>
</dbReference>
<dbReference type="PaxDb" id="243274-THEMA_03565"/>
<dbReference type="DNASU" id="897131"/>
<dbReference type="EnsemblBacteria" id="AAD35323">
    <property type="protein sequence ID" value="AAD35323"/>
    <property type="gene ID" value="TM_0232"/>
</dbReference>
<dbReference type="KEGG" id="tma:TM0232"/>
<dbReference type="KEGG" id="tmi:THEMA_03565"/>
<dbReference type="KEGG" id="tmm:Tmari_0230"/>
<dbReference type="KEGG" id="tmw:THMA_0239"/>
<dbReference type="eggNOG" id="COG0707">
    <property type="taxonomic scope" value="Bacteria"/>
</dbReference>
<dbReference type="InParanoid" id="Q9WY74"/>
<dbReference type="OrthoDB" id="9808936at2"/>
<dbReference type="UniPathway" id="UPA00219"/>
<dbReference type="Proteomes" id="UP000008183">
    <property type="component" value="Chromosome"/>
</dbReference>
<dbReference type="GO" id="GO:0005886">
    <property type="term" value="C:plasma membrane"/>
    <property type="evidence" value="ECO:0007669"/>
    <property type="project" value="UniProtKB-SubCell"/>
</dbReference>
<dbReference type="GO" id="GO:0016757">
    <property type="term" value="F:glycosyltransferase activity"/>
    <property type="evidence" value="ECO:0000318"/>
    <property type="project" value="GO_Central"/>
</dbReference>
<dbReference type="GO" id="GO:0051991">
    <property type="term" value="F:UDP-N-acetyl-D-glucosamine:N-acetylmuramoyl-L-alanyl-D-glutamyl-meso-2,6-diaminopimelyl-D-alanyl-D-alanine-diphosphoundecaprenol 4-beta-N-acetylglucosaminlytransferase activity"/>
    <property type="evidence" value="ECO:0007669"/>
    <property type="project" value="RHEA"/>
</dbReference>
<dbReference type="GO" id="GO:0050511">
    <property type="term" value="F:undecaprenyldiphospho-muramoylpentapeptide beta-N-acetylglucosaminyltransferase activity"/>
    <property type="evidence" value="ECO:0007669"/>
    <property type="project" value="UniProtKB-UniRule"/>
</dbReference>
<dbReference type="GO" id="GO:0005975">
    <property type="term" value="P:carbohydrate metabolic process"/>
    <property type="evidence" value="ECO:0007669"/>
    <property type="project" value="InterPro"/>
</dbReference>
<dbReference type="GO" id="GO:0051301">
    <property type="term" value="P:cell division"/>
    <property type="evidence" value="ECO:0007669"/>
    <property type="project" value="UniProtKB-KW"/>
</dbReference>
<dbReference type="GO" id="GO:0071555">
    <property type="term" value="P:cell wall organization"/>
    <property type="evidence" value="ECO:0007669"/>
    <property type="project" value="UniProtKB-KW"/>
</dbReference>
<dbReference type="GO" id="GO:0030259">
    <property type="term" value="P:lipid glycosylation"/>
    <property type="evidence" value="ECO:0007669"/>
    <property type="project" value="UniProtKB-UniRule"/>
</dbReference>
<dbReference type="GO" id="GO:0009252">
    <property type="term" value="P:peptidoglycan biosynthetic process"/>
    <property type="evidence" value="ECO:0007669"/>
    <property type="project" value="UniProtKB-UniRule"/>
</dbReference>
<dbReference type="GO" id="GO:0008360">
    <property type="term" value="P:regulation of cell shape"/>
    <property type="evidence" value="ECO:0007669"/>
    <property type="project" value="UniProtKB-KW"/>
</dbReference>
<dbReference type="CDD" id="cd03785">
    <property type="entry name" value="GT28_MurG"/>
    <property type="match status" value="1"/>
</dbReference>
<dbReference type="Gene3D" id="3.40.50.2000">
    <property type="entry name" value="Glycogen Phosphorylase B"/>
    <property type="match status" value="2"/>
</dbReference>
<dbReference type="HAMAP" id="MF_00033">
    <property type="entry name" value="MurG"/>
    <property type="match status" value="1"/>
</dbReference>
<dbReference type="InterPro" id="IPR006009">
    <property type="entry name" value="GlcNAc_MurG"/>
</dbReference>
<dbReference type="InterPro" id="IPR007235">
    <property type="entry name" value="Glyco_trans_28_C"/>
</dbReference>
<dbReference type="InterPro" id="IPR004276">
    <property type="entry name" value="GlycoTrans_28_N"/>
</dbReference>
<dbReference type="NCBIfam" id="TIGR01133">
    <property type="entry name" value="murG"/>
    <property type="match status" value="1"/>
</dbReference>
<dbReference type="PANTHER" id="PTHR21015:SF22">
    <property type="entry name" value="GLYCOSYLTRANSFERASE"/>
    <property type="match status" value="1"/>
</dbReference>
<dbReference type="PANTHER" id="PTHR21015">
    <property type="entry name" value="UDP-N-ACETYLGLUCOSAMINE--N-ACETYLMURAMYL-(PENTAPEPTIDE) PYROPHOSPHORYL-UNDECAPRENOL N-ACETYLGLUCOSAMINE TRANSFERASE 1"/>
    <property type="match status" value="1"/>
</dbReference>
<dbReference type="Pfam" id="PF04101">
    <property type="entry name" value="Glyco_tran_28_C"/>
    <property type="match status" value="1"/>
</dbReference>
<dbReference type="Pfam" id="PF03033">
    <property type="entry name" value="Glyco_transf_28"/>
    <property type="match status" value="1"/>
</dbReference>
<dbReference type="SUPFAM" id="SSF53756">
    <property type="entry name" value="UDP-Glycosyltransferase/glycogen phosphorylase"/>
    <property type="match status" value="1"/>
</dbReference>
<evidence type="ECO:0000255" key="1">
    <source>
        <dbReference type="HAMAP-Rule" id="MF_00033"/>
    </source>
</evidence>
<gene>
    <name evidence="1" type="primary">murG</name>
    <name type="ordered locus">TM_0232</name>
</gene>